<sequence length="66" mass="7836">MDPPARKEKSKVKEPAFRVEKAKQKSAQQELKQRQRAEIYALNRVMTELEQQQFDEFCKQMQPPGE</sequence>
<keyword id="KW-0175">Coiled coil</keyword>
<keyword id="KW-0963">Cytoplasm</keyword>
<keyword id="KW-0206">Cytoskeleton</keyword>
<keyword id="KW-1185">Reference proteome</keyword>
<keyword id="KW-0964">Secreted</keyword>
<dbReference type="EMBL" id="AK010418">
    <property type="protein sequence ID" value="BAC25297.1"/>
    <property type="molecule type" value="mRNA"/>
</dbReference>
<dbReference type="EMBL" id="BC002274">
    <property type="protein sequence ID" value="AAH02274.1"/>
    <property type="molecule type" value="mRNA"/>
</dbReference>
<dbReference type="CCDS" id="CCDS38858.1"/>
<dbReference type="RefSeq" id="NP_077782.1">
    <property type="nucleotide sequence ID" value="NM_024462.2"/>
</dbReference>
<dbReference type="SMR" id="Q99LQ4"/>
<dbReference type="FunCoup" id="Q99LQ4">
    <property type="interactions" value="35"/>
</dbReference>
<dbReference type="STRING" id="10090.ENSMUSP00000095518"/>
<dbReference type="PhosphoSitePlus" id="Q99LQ4"/>
<dbReference type="PaxDb" id="10090-ENSMUSP00000095518"/>
<dbReference type="ProteomicsDB" id="254723"/>
<dbReference type="Pumba" id="Q99LQ4"/>
<dbReference type="Antibodypedia" id="2034">
    <property type="antibodies" value="54 antibodies from 12 providers"/>
</dbReference>
<dbReference type="DNASU" id="69216"/>
<dbReference type="Ensembl" id="ENSMUST00000030395.9">
    <property type="protein sequence ID" value="ENSMUSP00000030395.3"/>
    <property type="gene ID" value="ENSMUSG00000028643.12"/>
</dbReference>
<dbReference type="GeneID" id="69216"/>
<dbReference type="KEGG" id="mmu:69216"/>
<dbReference type="UCSC" id="uc008ulk.2">
    <property type="organism name" value="mouse"/>
</dbReference>
<dbReference type="AGR" id="MGI:1916466"/>
<dbReference type="CTD" id="374969"/>
<dbReference type="MGI" id="MGI:1916466">
    <property type="gene designation" value="Svbp"/>
</dbReference>
<dbReference type="VEuPathDB" id="HostDB:ENSMUSG00000028643"/>
<dbReference type="eggNOG" id="ENOG502S99I">
    <property type="taxonomic scope" value="Eukaryota"/>
</dbReference>
<dbReference type="GeneTree" id="ENSGT00390000006113"/>
<dbReference type="HOGENOM" id="CLU_2830589_0_0_1"/>
<dbReference type="InParanoid" id="Q99LQ4"/>
<dbReference type="OMA" id="AMDPPAR"/>
<dbReference type="OrthoDB" id="10035051at2759"/>
<dbReference type="PhylomeDB" id="Q99LQ4"/>
<dbReference type="BioGRID-ORCS" id="69216">
    <property type="hits" value="2 hits in 42 CRISPR screens"/>
</dbReference>
<dbReference type="ChiTaRS" id="Svbp">
    <property type="organism name" value="mouse"/>
</dbReference>
<dbReference type="PRO" id="PR:Q99LQ4"/>
<dbReference type="Proteomes" id="UP000000589">
    <property type="component" value="Chromosome 4"/>
</dbReference>
<dbReference type="RNAct" id="Q99LQ4">
    <property type="molecule type" value="protein"/>
</dbReference>
<dbReference type="Bgee" id="ENSMUSG00000028643">
    <property type="expression patterns" value="Expressed in embryonic brain and 254 other cell types or tissues"/>
</dbReference>
<dbReference type="ExpressionAtlas" id="Q99LQ4">
    <property type="expression patterns" value="baseline and differential"/>
</dbReference>
<dbReference type="GO" id="GO:0045177">
    <property type="term" value="C:apical part of cell"/>
    <property type="evidence" value="ECO:0000266"/>
    <property type="project" value="MGI"/>
</dbReference>
<dbReference type="GO" id="GO:0005737">
    <property type="term" value="C:cytoplasm"/>
    <property type="evidence" value="ECO:0007669"/>
    <property type="project" value="UniProtKB-SubCell"/>
</dbReference>
<dbReference type="GO" id="GO:0005856">
    <property type="term" value="C:cytoskeleton"/>
    <property type="evidence" value="ECO:0007669"/>
    <property type="project" value="UniProtKB-SubCell"/>
</dbReference>
<dbReference type="GO" id="GO:0005576">
    <property type="term" value="C:extracellular region"/>
    <property type="evidence" value="ECO:0007669"/>
    <property type="project" value="UniProtKB-SubCell"/>
</dbReference>
<dbReference type="GO" id="GO:0008017">
    <property type="term" value="F:microtubule binding"/>
    <property type="evidence" value="ECO:0000250"/>
    <property type="project" value="UniProtKB"/>
</dbReference>
<dbReference type="GO" id="GO:0016504">
    <property type="term" value="F:peptidase activator activity"/>
    <property type="evidence" value="ECO:0000314"/>
    <property type="project" value="UniProtKB"/>
</dbReference>
<dbReference type="GO" id="GO:0061564">
    <property type="term" value="P:axon development"/>
    <property type="evidence" value="ECO:0000315"/>
    <property type="project" value="UniProtKB"/>
</dbReference>
<dbReference type="GO" id="GO:0007420">
    <property type="term" value="P:brain development"/>
    <property type="evidence" value="ECO:0000315"/>
    <property type="project" value="UniProtKB"/>
</dbReference>
<dbReference type="GO" id="GO:0010596">
    <property type="term" value="P:negative regulation of endothelial cell migration"/>
    <property type="evidence" value="ECO:0000266"/>
    <property type="project" value="MGI"/>
</dbReference>
<dbReference type="GO" id="GO:0031397">
    <property type="term" value="P:negative regulation of protein ubiquitination"/>
    <property type="evidence" value="ECO:0000266"/>
    <property type="project" value="MGI"/>
</dbReference>
<dbReference type="GO" id="GO:0009306">
    <property type="term" value="P:protein secretion"/>
    <property type="evidence" value="ECO:0000266"/>
    <property type="project" value="MGI"/>
</dbReference>
<dbReference type="GO" id="GO:0006508">
    <property type="term" value="P:proteolysis"/>
    <property type="evidence" value="ECO:0000314"/>
    <property type="project" value="UniProtKB"/>
</dbReference>
<dbReference type="GO" id="GO:1905048">
    <property type="term" value="P:regulation of metallopeptidase activity"/>
    <property type="evidence" value="ECO:0000250"/>
    <property type="project" value="UniProtKB"/>
</dbReference>
<dbReference type="InterPro" id="IPR031378">
    <property type="entry name" value="SVBP"/>
</dbReference>
<dbReference type="PANTHER" id="PTHR34762">
    <property type="entry name" value="SMALL VASOHIBIN-BINDING PROTEIN"/>
    <property type="match status" value="1"/>
</dbReference>
<dbReference type="PANTHER" id="PTHR34762:SF1">
    <property type="entry name" value="SMALL VASOHIBIN-BINDING PROTEIN"/>
    <property type="match status" value="1"/>
</dbReference>
<dbReference type="Pfam" id="PF15674">
    <property type="entry name" value="CCDC23"/>
    <property type="match status" value="1"/>
</dbReference>
<protein>
    <recommendedName>
        <fullName evidence="10">Small vasohibin-binding protein</fullName>
    </recommendedName>
    <alternativeName>
        <fullName evidence="12">Coiled coil domain-containing protein 23</fullName>
    </alternativeName>
</protein>
<gene>
    <name evidence="10" type="primary">Svbp</name>
    <name evidence="12" type="synonym">Ccdc23</name>
</gene>
<reference key="1">
    <citation type="journal article" date="2005" name="Science">
        <title>The transcriptional landscape of the mammalian genome.</title>
        <authorList>
            <person name="Carninci P."/>
            <person name="Kasukawa T."/>
            <person name="Katayama S."/>
            <person name="Gough J."/>
            <person name="Frith M.C."/>
            <person name="Maeda N."/>
            <person name="Oyama R."/>
            <person name="Ravasi T."/>
            <person name="Lenhard B."/>
            <person name="Wells C."/>
            <person name="Kodzius R."/>
            <person name="Shimokawa K."/>
            <person name="Bajic V.B."/>
            <person name="Brenner S.E."/>
            <person name="Batalov S."/>
            <person name="Forrest A.R."/>
            <person name="Zavolan M."/>
            <person name="Davis M.J."/>
            <person name="Wilming L.G."/>
            <person name="Aidinis V."/>
            <person name="Allen J.E."/>
            <person name="Ambesi-Impiombato A."/>
            <person name="Apweiler R."/>
            <person name="Aturaliya R.N."/>
            <person name="Bailey T.L."/>
            <person name="Bansal M."/>
            <person name="Baxter L."/>
            <person name="Beisel K.W."/>
            <person name="Bersano T."/>
            <person name="Bono H."/>
            <person name="Chalk A.M."/>
            <person name="Chiu K.P."/>
            <person name="Choudhary V."/>
            <person name="Christoffels A."/>
            <person name="Clutterbuck D.R."/>
            <person name="Crowe M.L."/>
            <person name="Dalla E."/>
            <person name="Dalrymple B.P."/>
            <person name="de Bono B."/>
            <person name="Della Gatta G."/>
            <person name="di Bernardo D."/>
            <person name="Down T."/>
            <person name="Engstrom P."/>
            <person name="Fagiolini M."/>
            <person name="Faulkner G."/>
            <person name="Fletcher C.F."/>
            <person name="Fukushima T."/>
            <person name="Furuno M."/>
            <person name="Futaki S."/>
            <person name="Gariboldi M."/>
            <person name="Georgii-Hemming P."/>
            <person name="Gingeras T.R."/>
            <person name="Gojobori T."/>
            <person name="Green R.E."/>
            <person name="Gustincich S."/>
            <person name="Harbers M."/>
            <person name="Hayashi Y."/>
            <person name="Hensch T.K."/>
            <person name="Hirokawa N."/>
            <person name="Hill D."/>
            <person name="Huminiecki L."/>
            <person name="Iacono M."/>
            <person name="Ikeo K."/>
            <person name="Iwama A."/>
            <person name="Ishikawa T."/>
            <person name="Jakt M."/>
            <person name="Kanapin A."/>
            <person name="Katoh M."/>
            <person name="Kawasawa Y."/>
            <person name="Kelso J."/>
            <person name="Kitamura H."/>
            <person name="Kitano H."/>
            <person name="Kollias G."/>
            <person name="Krishnan S.P."/>
            <person name="Kruger A."/>
            <person name="Kummerfeld S.K."/>
            <person name="Kurochkin I.V."/>
            <person name="Lareau L.F."/>
            <person name="Lazarevic D."/>
            <person name="Lipovich L."/>
            <person name="Liu J."/>
            <person name="Liuni S."/>
            <person name="McWilliam S."/>
            <person name="Madan Babu M."/>
            <person name="Madera M."/>
            <person name="Marchionni L."/>
            <person name="Matsuda H."/>
            <person name="Matsuzawa S."/>
            <person name="Miki H."/>
            <person name="Mignone F."/>
            <person name="Miyake S."/>
            <person name="Morris K."/>
            <person name="Mottagui-Tabar S."/>
            <person name="Mulder N."/>
            <person name="Nakano N."/>
            <person name="Nakauchi H."/>
            <person name="Ng P."/>
            <person name="Nilsson R."/>
            <person name="Nishiguchi S."/>
            <person name="Nishikawa S."/>
            <person name="Nori F."/>
            <person name="Ohara O."/>
            <person name="Okazaki Y."/>
            <person name="Orlando V."/>
            <person name="Pang K.C."/>
            <person name="Pavan W.J."/>
            <person name="Pavesi G."/>
            <person name="Pesole G."/>
            <person name="Petrovsky N."/>
            <person name="Piazza S."/>
            <person name="Reed J."/>
            <person name="Reid J.F."/>
            <person name="Ring B.Z."/>
            <person name="Ringwald M."/>
            <person name="Rost B."/>
            <person name="Ruan Y."/>
            <person name="Salzberg S.L."/>
            <person name="Sandelin A."/>
            <person name="Schneider C."/>
            <person name="Schoenbach C."/>
            <person name="Sekiguchi K."/>
            <person name="Semple C.A."/>
            <person name="Seno S."/>
            <person name="Sessa L."/>
            <person name="Sheng Y."/>
            <person name="Shibata Y."/>
            <person name="Shimada H."/>
            <person name="Shimada K."/>
            <person name="Silva D."/>
            <person name="Sinclair B."/>
            <person name="Sperling S."/>
            <person name="Stupka E."/>
            <person name="Sugiura K."/>
            <person name="Sultana R."/>
            <person name="Takenaka Y."/>
            <person name="Taki K."/>
            <person name="Tammoja K."/>
            <person name="Tan S.L."/>
            <person name="Tang S."/>
            <person name="Taylor M.S."/>
            <person name="Tegner J."/>
            <person name="Teichmann S.A."/>
            <person name="Ueda H.R."/>
            <person name="van Nimwegen E."/>
            <person name="Verardo R."/>
            <person name="Wei C.L."/>
            <person name="Yagi K."/>
            <person name="Yamanishi H."/>
            <person name="Zabarovsky E."/>
            <person name="Zhu S."/>
            <person name="Zimmer A."/>
            <person name="Hide W."/>
            <person name="Bult C."/>
            <person name="Grimmond S.M."/>
            <person name="Teasdale R.D."/>
            <person name="Liu E.T."/>
            <person name="Brusic V."/>
            <person name="Quackenbush J."/>
            <person name="Wahlestedt C."/>
            <person name="Mattick J.S."/>
            <person name="Hume D.A."/>
            <person name="Kai C."/>
            <person name="Sasaki D."/>
            <person name="Tomaru Y."/>
            <person name="Fukuda S."/>
            <person name="Kanamori-Katayama M."/>
            <person name="Suzuki M."/>
            <person name="Aoki J."/>
            <person name="Arakawa T."/>
            <person name="Iida J."/>
            <person name="Imamura K."/>
            <person name="Itoh M."/>
            <person name="Kato T."/>
            <person name="Kawaji H."/>
            <person name="Kawagashira N."/>
            <person name="Kawashima T."/>
            <person name="Kojima M."/>
            <person name="Kondo S."/>
            <person name="Konno H."/>
            <person name="Nakano K."/>
            <person name="Ninomiya N."/>
            <person name="Nishio T."/>
            <person name="Okada M."/>
            <person name="Plessy C."/>
            <person name="Shibata K."/>
            <person name="Shiraki T."/>
            <person name="Suzuki S."/>
            <person name="Tagami M."/>
            <person name="Waki K."/>
            <person name="Watahiki A."/>
            <person name="Okamura-Oho Y."/>
            <person name="Suzuki H."/>
            <person name="Kawai J."/>
            <person name="Hayashizaki Y."/>
        </authorList>
    </citation>
    <scope>NUCLEOTIDE SEQUENCE [LARGE SCALE MRNA]</scope>
    <source>
        <strain>C57BL/6J</strain>
    </source>
</reference>
<reference key="2">
    <citation type="journal article" date="2004" name="Genome Res.">
        <title>The status, quality, and expansion of the NIH full-length cDNA project: the Mammalian Gene Collection (MGC).</title>
        <authorList>
            <consortium name="The MGC Project Team"/>
        </authorList>
    </citation>
    <scope>NUCLEOTIDE SEQUENCE [LARGE SCALE MRNA]</scope>
    <source>
        <strain>C57BL/6J</strain>
        <strain>FVB/N</strain>
        <tissue>Mammary tumor</tissue>
    </source>
</reference>
<reference key="3">
    <citation type="journal article" date="2010" name="J. Cell Sci.">
        <title>Isolation of a small vasohibin-binding protein (SVBP) and its role in vasohibin secretion.</title>
        <authorList>
            <person name="Suzuki Y."/>
            <person name="Kobayashi M."/>
            <person name="Miyashita H."/>
            <person name="Ohta H."/>
            <person name="Sonoda H."/>
            <person name="Sato Y."/>
        </authorList>
    </citation>
    <scope>SUBCELLULAR LOCATION</scope>
    <scope>TISSUE SPECIFICITY</scope>
</reference>
<reference key="4">
    <citation type="journal article" date="2017" name="Science">
        <title>Vasohibins/SVBP are tubulin carboxypeptidases (TCPs) that regulate neuron differentiation.</title>
        <authorList>
            <person name="Aillaud C."/>
            <person name="Bosc C."/>
            <person name="Peris L."/>
            <person name="Bosson A."/>
            <person name="Heemeryck P."/>
            <person name="Van Dijk J."/>
            <person name="Le Friec J."/>
            <person name="Boulan B."/>
            <person name="Vossier F."/>
            <person name="Sanman L.E."/>
            <person name="Syed S."/>
            <person name="Amara N."/>
            <person name="Coute Y."/>
            <person name="Lafanechere L."/>
            <person name="Denarier E."/>
            <person name="Delphin C."/>
            <person name="Pelletier L."/>
            <person name="Humbert S."/>
            <person name="Bogyo M."/>
            <person name="Andrieux A."/>
            <person name="Rogowski K."/>
            <person name="Moutin M.J."/>
        </authorList>
    </citation>
    <scope>FUNCTION</scope>
    <scope>INTERACTION WITH VASH1 AND VASH2</scope>
</reference>
<reference key="5">
    <citation type="journal article" date="2019" name="Nat. Commun.">
        <title>Structural basis of tubulin detyrosination by VASH2/SVBP heterodimer.</title>
        <authorList>
            <person name="Zhou C."/>
            <person name="Yan L."/>
            <person name="Zhang W.H."/>
            <person name="Liu Z."/>
        </authorList>
    </citation>
    <scope>INTERACTION WITH VASH2</scope>
</reference>
<reference key="6">
    <citation type="journal article" date="2019" name="Nat. Struct. Mol. Biol.">
        <title>Structural basis of tubulin detyrosination by the vasohibin-SVBP enzyme complex.</title>
        <authorList>
            <person name="Wang N."/>
            <person name="Bosc C."/>
            <person name="Ryul Choi S."/>
            <person name="Boulan B."/>
            <person name="Peris L."/>
            <person name="Olieric N."/>
            <person name="Bao H."/>
            <person name="Krichen F."/>
            <person name="Chen L."/>
            <person name="Andrieux A."/>
            <person name="Olieric V."/>
            <person name="Moutin M.J."/>
            <person name="Steinmetz M.O."/>
            <person name="Huang H."/>
        </authorList>
    </citation>
    <scope>FUNCTION</scope>
</reference>
<reference key="7">
    <citation type="journal article" date="2019" name="Hum. Mol. Genet.">
        <title>Defective tubulin detyrosination causes structural brain abnormalities with cognitive deficiency in humans and mice.</title>
        <authorList>
            <consortium name="WGS500 Consortium"/>
            <consortium name="Genomics England Research Consortium"/>
            <person name="Pagnamenta A.T."/>
            <person name="Heemeryck P."/>
            <person name="Martin H.C."/>
            <person name="Bosc C."/>
            <person name="Peris L."/>
            <person name="Uszynski I."/>
            <person name="Gory-Faure S."/>
            <person name="Couly S."/>
            <person name="Deshpande C."/>
            <person name="Siddiqui A."/>
            <person name="Elmonairy A.A."/>
            <person name="Jayawant S."/>
            <person name="Murthy S."/>
            <person name="Walker I."/>
            <person name="Loong L."/>
            <person name="Bauer P."/>
            <person name="Vossier F."/>
            <person name="Denarier E."/>
            <person name="Maurice T."/>
            <person name="Barbier E.L."/>
            <person name="Deloulme J.C."/>
            <person name="Taylor J.C."/>
            <person name="Blair E.M."/>
            <person name="Andrieux A."/>
            <person name="Moutin M.J."/>
        </authorList>
    </citation>
    <scope>FUNCTION</scope>
    <scope>DISRUPTION PHENOTYPE</scope>
</reference>
<reference key="8">
    <citation type="journal article" date="2022" name="Science">
        <title>Posttranslational modification of microtubules by the MATCAP detyrosinase.</title>
        <authorList>
            <person name="Landskron L."/>
            <person name="Bak J."/>
            <person name="Adamopoulos A."/>
            <person name="Kaplani K."/>
            <person name="Moraiti M."/>
            <person name="van den Hengel L.G."/>
            <person name="Song J.Y."/>
            <person name="Bleijerveld O.B."/>
            <person name="Nieuwenhuis J."/>
            <person name="Heidebrecht T."/>
            <person name="Henneman L."/>
            <person name="Moutin M.J."/>
            <person name="Barisic M."/>
            <person name="Taraviras S."/>
            <person name="Perrakis A."/>
            <person name="Brummelkamp T.R."/>
        </authorList>
    </citation>
    <scope>FUNCTION</scope>
    <scope>DISRUPTION PHENOTYPE</scope>
</reference>
<proteinExistence type="evidence at protein level"/>
<accession>Q99LQ4</accession>
<feature type="chain" id="PRO_0000233664" description="Small vasohibin-binding protein">
    <location>
        <begin position="1"/>
        <end position="66"/>
    </location>
</feature>
<feature type="region of interest" description="Disordered" evidence="3">
    <location>
        <begin position="1"/>
        <end position="30"/>
    </location>
</feature>
<feature type="coiled-coil region" evidence="2">
    <location>
        <begin position="5"/>
        <end position="52"/>
    </location>
</feature>
<feature type="compositionally biased region" description="Basic and acidic residues" evidence="3">
    <location>
        <begin position="1"/>
        <end position="23"/>
    </location>
</feature>
<comment type="function">
    <text evidence="1 5 6 8 9">Enhances the tyrosine carboxypeptidase activity of VASH1 and VASH2, thereby promoting the removal of the C-terminal tyrosine residue of alpha-tubulin (PubMed:29146868, PubMed:31363758, PubMed:35482892). Also required to enhance the solubility and secretion of VASH1 and VASH2 (By similarity). Plays a role in axon and excitatory synapse formation (PubMed:31235911).</text>
</comment>
<comment type="subunit">
    <text evidence="5 7">Interacts with VASH1 and VASH2.</text>
</comment>
<comment type="subcellular location">
    <subcellularLocation>
        <location evidence="4">Cytoplasm</location>
    </subcellularLocation>
    <subcellularLocation>
        <location evidence="4">Secreted</location>
    </subcellularLocation>
    <subcellularLocation>
        <location evidence="1">Cytoplasm</location>
        <location evidence="1">Cytoskeleton</location>
    </subcellularLocation>
    <text evidence="4">Detected both intracellularly and extracellularly (PubMed:20736312). Within cells, localizes mainly to the apical part of the cell (PubMed:20736312).</text>
</comment>
<comment type="tissue specificity">
    <text evidence="4">Highly expressed in bone marrow, spleen and testis.</text>
</comment>
<comment type="disruption phenotype">
    <text evidence="8 9">Mice display a significant reduction in whole brain volume, with a particular decrease in white matter (PubMed:31363758). Neurons show decreased, but not abolished, tubulin detyrosination, leading to an accumulation of tyrosinated tubulin. This causes delayed axonal differentiation and morphologically disturbed dendritic branching (PubMed:31363758). Mice show behavioral abnormalities, including increased activity and reduced social investigation (PubMed:31363758). Mice lacking both Matcap1 and Svbp are viable but show a reduction in brain volume: microcephaly is associated with proliferative defects during neurogenesis and abnormal behavior (PubMed:35482892). Cells lacking both Matcap1 and Svbp show abolished tubulin detyrosination (PubMed:35482892).</text>
</comment>
<comment type="similarity">
    <text evidence="11">Belongs to the SVBP family.</text>
</comment>
<organism>
    <name type="scientific">Mus musculus</name>
    <name type="common">Mouse</name>
    <dbReference type="NCBI Taxonomy" id="10090"/>
    <lineage>
        <taxon>Eukaryota</taxon>
        <taxon>Metazoa</taxon>
        <taxon>Chordata</taxon>
        <taxon>Craniata</taxon>
        <taxon>Vertebrata</taxon>
        <taxon>Euteleostomi</taxon>
        <taxon>Mammalia</taxon>
        <taxon>Eutheria</taxon>
        <taxon>Euarchontoglires</taxon>
        <taxon>Glires</taxon>
        <taxon>Rodentia</taxon>
        <taxon>Myomorpha</taxon>
        <taxon>Muroidea</taxon>
        <taxon>Muridae</taxon>
        <taxon>Murinae</taxon>
        <taxon>Mus</taxon>
        <taxon>Mus</taxon>
    </lineage>
</organism>
<evidence type="ECO:0000250" key="1">
    <source>
        <dbReference type="UniProtKB" id="Q8N300"/>
    </source>
</evidence>
<evidence type="ECO:0000255" key="2"/>
<evidence type="ECO:0000256" key="3">
    <source>
        <dbReference type="SAM" id="MobiDB-lite"/>
    </source>
</evidence>
<evidence type="ECO:0000269" key="4">
    <source>
    </source>
</evidence>
<evidence type="ECO:0000269" key="5">
    <source>
    </source>
</evidence>
<evidence type="ECO:0000269" key="6">
    <source>
    </source>
</evidence>
<evidence type="ECO:0000269" key="7">
    <source>
    </source>
</evidence>
<evidence type="ECO:0000269" key="8">
    <source>
    </source>
</evidence>
<evidence type="ECO:0000269" key="9">
    <source>
    </source>
</evidence>
<evidence type="ECO:0000303" key="10">
    <source>
    </source>
</evidence>
<evidence type="ECO:0000305" key="11"/>
<evidence type="ECO:0000312" key="12">
    <source>
        <dbReference type="MGI" id="MGI:1916466"/>
    </source>
</evidence>
<name>SVBP_MOUSE</name>